<dbReference type="EMBL" id="AE017194">
    <property type="protein sequence ID" value="AAS43171.1"/>
    <property type="molecule type" value="Genomic_DNA"/>
</dbReference>
<dbReference type="SMR" id="Q730Z6"/>
<dbReference type="KEGG" id="bca:BCE_4270"/>
<dbReference type="HOGENOM" id="CLU_074944_0_1_9"/>
<dbReference type="UniPathway" id="UPA00345"/>
<dbReference type="Proteomes" id="UP000002527">
    <property type="component" value="Chromosome"/>
</dbReference>
<dbReference type="GO" id="GO:0005737">
    <property type="term" value="C:cytoplasm"/>
    <property type="evidence" value="ECO:0007669"/>
    <property type="project" value="UniProtKB-SubCell"/>
</dbReference>
<dbReference type="GO" id="GO:0003746">
    <property type="term" value="F:translation elongation factor activity"/>
    <property type="evidence" value="ECO:0007669"/>
    <property type="project" value="UniProtKB-UniRule"/>
</dbReference>
<dbReference type="GO" id="GO:0043043">
    <property type="term" value="P:peptide biosynthetic process"/>
    <property type="evidence" value="ECO:0007669"/>
    <property type="project" value="InterPro"/>
</dbReference>
<dbReference type="CDD" id="cd04470">
    <property type="entry name" value="S1_EF-P_repeat_1"/>
    <property type="match status" value="1"/>
</dbReference>
<dbReference type="CDD" id="cd05794">
    <property type="entry name" value="S1_EF-P_repeat_2"/>
    <property type="match status" value="1"/>
</dbReference>
<dbReference type="FunFam" id="2.30.30.30:FF:000010">
    <property type="entry name" value="Elongation factor P"/>
    <property type="match status" value="1"/>
</dbReference>
<dbReference type="FunFam" id="2.40.50.140:FF:000004">
    <property type="entry name" value="Elongation factor P"/>
    <property type="match status" value="1"/>
</dbReference>
<dbReference type="FunFam" id="2.40.50.140:FF:000009">
    <property type="entry name" value="Elongation factor P"/>
    <property type="match status" value="1"/>
</dbReference>
<dbReference type="Gene3D" id="2.30.30.30">
    <property type="match status" value="1"/>
</dbReference>
<dbReference type="Gene3D" id="2.40.50.140">
    <property type="entry name" value="Nucleic acid-binding proteins"/>
    <property type="match status" value="2"/>
</dbReference>
<dbReference type="HAMAP" id="MF_00141">
    <property type="entry name" value="EF_P"/>
    <property type="match status" value="1"/>
</dbReference>
<dbReference type="InterPro" id="IPR015365">
    <property type="entry name" value="Elong-fact-P_C"/>
</dbReference>
<dbReference type="InterPro" id="IPR012340">
    <property type="entry name" value="NA-bd_OB-fold"/>
</dbReference>
<dbReference type="InterPro" id="IPR014722">
    <property type="entry name" value="Rib_uL2_dom2"/>
</dbReference>
<dbReference type="InterPro" id="IPR020599">
    <property type="entry name" value="Transl_elong_fac_P/YeiP"/>
</dbReference>
<dbReference type="InterPro" id="IPR013185">
    <property type="entry name" value="Transl_elong_KOW-like"/>
</dbReference>
<dbReference type="InterPro" id="IPR001059">
    <property type="entry name" value="Transl_elong_P/YeiP_cen"/>
</dbReference>
<dbReference type="InterPro" id="IPR013852">
    <property type="entry name" value="Transl_elong_P/YeiP_CS"/>
</dbReference>
<dbReference type="InterPro" id="IPR011768">
    <property type="entry name" value="Transl_elongation_fac_P"/>
</dbReference>
<dbReference type="InterPro" id="IPR008991">
    <property type="entry name" value="Translation_prot_SH3-like_sf"/>
</dbReference>
<dbReference type="NCBIfam" id="TIGR00038">
    <property type="entry name" value="efp"/>
    <property type="match status" value="1"/>
</dbReference>
<dbReference type="NCBIfam" id="NF001810">
    <property type="entry name" value="PRK00529.1"/>
    <property type="match status" value="1"/>
</dbReference>
<dbReference type="PANTHER" id="PTHR30053">
    <property type="entry name" value="ELONGATION FACTOR P"/>
    <property type="match status" value="1"/>
</dbReference>
<dbReference type="PANTHER" id="PTHR30053:SF12">
    <property type="entry name" value="ELONGATION FACTOR P (EF-P) FAMILY PROTEIN"/>
    <property type="match status" value="1"/>
</dbReference>
<dbReference type="Pfam" id="PF01132">
    <property type="entry name" value="EFP"/>
    <property type="match status" value="1"/>
</dbReference>
<dbReference type="Pfam" id="PF08207">
    <property type="entry name" value="EFP_N"/>
    <property type="match status" value="1"/>
</dbReference>
<dbReference type="Pfam" id="PF09285">
    <property type="entry name" value="Elong-fact-P_C"/>
    <property type="match status" value="1"/>
</dbReference>
<dbReference type="PIRSF" id="PIRSF005901">
    <property type="entry name" value="EF-P"/>
    <property type="match status" value="1"/>
</dbReference>
<dbReference type="SMART" id="SM01185">
    <property type="entry name" value="EFP"/>
    <property type="match status" value="1"/>
</dbReference>
<dbReference type="SMART" id="SM00841">
    <property type="entry name" value="Elong-fact-P_C"/>
    <property type="match status" value="1"/>
</dbReference>
<dbReference type="SUPFAM" id="SSF50249">
    <property type="entry name" value="Nucleic acid-binding proteins"/>
    <property type="match status" value="2"/>
</dbReference>
<dbReference type="SUPFAM" id="SSF50104">
    <property type="entry name" value="Translation proteins SH3-like domain"/>
    <property type="match status" value="1"/>
</dbReference>
<dbReference type="PROSITE" id="PS01275">
    <property type="entry name" value="EFP"/>
    <property type="match status" value="1"/>
</dbReference>
<protein>
    <recommendedName>
        <fullName evidence="1">Elongation factor P</fullName>
        <shortName evidence="1">EF-P</shortName>
    </recommendedName>
</protein>
<comment type="function">
    <text evidence="1">Involved in peptide bond synthesis. Stimulates efficient translation and peptide-bond synthesis on native or reconstituted 70S ribosomes in vitro. Probably functions indirectly by altering the affinity of the ribosome for aminoacyl-tRNA, thus increasing their reactivity as acceptors for peptidyl transferase.</text>
</comment>
<comment type="pathway">
    <text evidence="1">Protein biosynthesis; polypeptide chain elongation.</text>
</comment>
<comment type="subcellular location">
    <subcellularLocation>
        <location evidence="1">Cytoplasm</location>
    </subcellularLocation>
</comment>
<comment type="similarity">
    <text evidence="1">Belongs to the elongation factor P family.</text>
</comment>
<reference key="1">
    <citation type="journal article" date="2004" name="Nucleic Acids Res.">
        <title>The genome sequence of Bacillus cereus ATCC 10987 reveals metabolic adaptations and a large plasmid related to Bacillus anthracis pXO1.</title>
        <authorList>
            <person name="Rasko D.A."/>
            <person name="Ravel J."/>
            <person name="Oekstad O.A."/>
            <person name="Helgason E."/>
            <person name="Cer R.Z."/>
            <person name="Jiang L."/>
            <person name="Shores K.A."/>
            <person name="Fouts D.E."/>
            <person name="Tourasse N.J."/>
            <person name="Angiuoli S.V."/>
            <person name="Kolonay J.F."/>
            <person name="Nelson W.C."/>
            <person name="Kolstoe A.-B."/>
            <person name="Fraser C.M."/>
            <person name="Read T.D."/>
        </authorList>
    </citation>
    <scope>NUCLEOTIDE SEQUENCE [LARGE SCALE GENOMIC DNA]</scope>
    <source>
        <strain>ATCC 10987 / NRS 248</strain>
    </source>
</reference>
<organism>
    <name type="scientific">Bacillus cereus (strain ATCC 10987 / NRS 248)</name>
    <dbReference type="NCBI Taxonomy" id="222523"/>
    <lineage>
        <taxon>Bacteria</taxon>
        <taxon>Bacillati</taxon>
        <taxon>Bacillota</taxon>
        <taxon>Bacilli</taxon>
        <taxon>Bacillales</taxon>
        <taxon>Bacillaceae</taxon>
        <taxon>Bacillus</taxon>
        <taxon>Bacillus cereus group</taxon>
    </lineage>
</organism>
<feature type="chain" id="PRO_0000094192" description="Elongation factor P">
    <location>
        <begin position="1"/>
        <end position="185"/>
    </location>
</feature>
<sequence>MISVNDFRTGLTIAVDNGLWQVLDFQHVKPGKGAAFVRSKLRNLRTGSVQEKTFRAGEKVEKAHIENRRMQYLYASGESHVFMDNGTYEQIELGEKQIERELKFLKENMEVSIMTYQGEVLGVELPNTVELQVTETEPGIKGDTASNVTKPATLETGLVVQVPIFINEGETLIINTGEGKYVSRA</sequence>
<accession>Q730Z6</accession>
<gene>
    <name evidence="1" type="primary">efp</name>
    <name type="ordered locus">BCE_4270</name>
</gene>
<proteinExistence type="inferred from homology"/>
<keyword id="KW-0963">Cytoplasm</keyword>
<keyword id="KW-0251">Elongation factor</keyword>
<keyword id="KW-0648">Protein biosynthesis</keyword>
<evidence type="ECO:0000255" key="1">
    <source>
        <dbReference type="HAMAP-Rule" id="MF_00141"/>
    </source>
</evidence>
<name>EFP_BACC1</name>